<reference key="1">
    <citation type="submission" date="2002-12" db="EMBL/GenBank/DDBJ databases">
        <title>Complete genome sequence of Vibrio vulnificus CMCP6.</title>
        <authorList>
            <person name="Rhee J.H."/>
            <person name="Kim S.Y."/>
            <person name="Chung S.S."/>
            <person name="Kim J.J."/>
            <person name="Moon Y.H."/>
            <person name="Jeong H."/>
            <person name="Choy H.E."/>
        </authorList>
    </citation>
    <scope>NUCLEOTIDE SEQUENCE [LARGE SCALE GENOMIC DNA]</scope>
    <source>
        <strain>CMCP6</strain>
    </source>
</reference>
<accession>P65130</accession>
<accession>Q9KRA5</accession>
<keyword id="KW-0963">Cytoplasm</keyword>
<keyword id="KW-0396">Initiation factor</keyword>
<keyword id="KW-0648">Protein biosynthesis</keyword>
<keyword id="KW-0694">RNA-binding</keyword>
<keyword id="KW-0699">rRNA-binding</keyword>
<dbReference type="EMBL" id="AE016795">
    <property type="protein sequence ID" value="AAO10510.1"/>
    <property type="molecule type" value="Genomic_DNA"/>
</dbReference>
<dbReference type="RefSeq" id="WP_001040192.1">
    <property type="nucleotide sequence ID" value="NC_004459.3"/>
</dbReference>
<dbReference type="SMR" id="P65130"/>
<dbReference type="GeneID" id="97540801"/>
<dbReference type="KEGG" id="vvu:VV1_2123"/>
<dbReference type="HOGENOM" id="CLU_151267_1_0_6"/>
<dbReference type="Proteomes" id="UP000002275">
    <property type="component" value="Chromosome 1"/>
</dbReference>
<dbReference type="GO" id="GO:0005829">
    <property type="term" value="C:cytosol"/>
    <property type="evidence" value="ECO:0007669"/>
    <property type="project" value="TreeGrafter"/>
</dbReference>
<dbReference type="GO" id="GO:0043022">
    <property type="term" value="F:ribosome binding"/>
    <property type="evidence" value="ECO:0007669"/>
    <property type="project" value="UniProtKB-UniRule"/>
</dbReference>
<dbReference type="GO" id="GO:0019843">
    <property type="term" value="F:rRNA binding"/>
    <property type="evidence" value="ECO:0007669"/>
    <property type="project" value="UniProtKB-UniRule"/>
</dbReference>
<dbReference type="GO" id="GO:0003743">
    <property type="term" value="F:translation initiation factor activity"/>
    <property type="evidence" value="ECO:0007669"/>
    <property type="project" value="UniProtKB-UniRule"/>
</dbReference>
<dbReference type="CDD" id="cd04451">
    <property type="entry name" value="S1_IF1"/>
    <property type="match status" value="1"/>
</dbReference>
<dbReference type="FunFam" id="2.40.50.140:FF:000002">
    <property type="entry name" value="Translation initiation factor IF-1"/>
    <property type="match status" value="1"/>
</dbReference>
<dbReference type="Gene3D" id="2.40.50.140">
    <property type="entry name" value="Nucleic acid-binding proteins"/>
    <property type="match status" value="1"/>
</dbReference>
<dbReference type="HAMAP" id="MF_00075">
    <property type="entry name" value="IF_1"/>
    <property type="match status" value="1"/>
</dbReference>
<dbReference type="InterPro" id="IPR012340">
    <property type="entry name" value="NA-bd_OB-fold"/>
</dbReference>
<dbReference type="InterPro" id="IPR006196">
    <property type="entry name" value="RNA-binding_domain_S1_IF1"/>
</dbReference>
<dbReference type="InterPro" id="IPR003029">
    <property type="entry name" value="S1_domain"/>
</dbReference>
<dbReference type="InterPro" id="IPR004368">
    <property type="entry name" value="TIF_IF1"/>
</dbReference>
<dbReference type="NCBIfam" id="TIGR00008">
    <property type="entry name" value="infA"/>
    <property type="match status" value="1"/>
</dbReference>
<dbReference type="PANTHER" id="PTHR33370">
    <property type="entry name" value="TRANSLATION INITIATION FACTOR IF-1, CHLOROPLASTIC"/>
    <property type="match status" value="1"/>
</dbReference>
<dbReference type="PANTHER" id="PTHR33370:SF1">
    <property type="entry name" value="TRANSLATION INITIATION FACTOR IF-1, CHLOROPLASTIC"/>
    <property type="match status" value="1"/>
</dbReference>
<dbReference type="Pfam" id="PF01176">
    <property type="entry name" value="eIF-1a"/>
    <property type="match status" value="1"/>
</dbReference>
<dbReference type="SMART" id="SM00316">
    <property type="entry name" value="S1"/>
    <property type="match status" value="1"/>
</dbReference>
<dbReference type="SUPFAM" id="SSF50249">
    <property type="entry name" value="Nucleic acid-binding proteins"/>
    <property type="match status" value="1"/>
</dbReference>
<dbReference type="PROSITE" id="PS50832">
    <property type="entry name" value="S1_IF1_TYPE"/>
    <property type="match status" value="1"/>
</dbReference>
<name>IF1_VIBVU</name>
<gene>
    <name evidence="1" type="primary">infA</name>
    <name type="ordered locus">VV1_2123</name>
</gene>
<organism>
    <name type="scientific">Vibrio vulnificus (strain CMCP6)</name>
    <dbReference type="NCBI Taxonomy" id="216895"/>
    <lineage>
        <taxon>Bacteria</taxon>
        <taxon>Pseudomonadati</taxon>
        <taxon>Pseudomonadota</taxon>
        <taxon>Gammaproteobacteria</taxon>
        <taxon>Vibrionales</taxon>
        <taxon>Vibrionaceae</taxon>
        <taxon>Vibrio</taxon>
    </lineage>
</organism>
<sequence length="72" mass="8223">MAKEDVIEMQGTVLDTLPNTMFRVELENGHVVTAHISGKMRKNYIRILTGDKVTVEMTPYDLSKGRIVFRAR</sequence>
<protein>
    <recommendedName>
        <fullName evidence="1">Translation initiation factor IF-1</fullName>
    </recommendedName>
</protein>
<comment type="function">
    <text evidence="1">One of the essential components for the initiation of protein synthesis. Stabilizes the binding of IF-2 and IF-3 on the 30S subunit to which N-formylmethionyl-tRNA(fMet) subsequently binds. Helps modulate mRNA selection, yielding the 30S pre-initiation complex (PIC). Upon addition of the 50S ribosomal subunit IF-1, IF-2 and IF-3 are released leaving the mature 70S translation initiation complex.</text>
</comment>
<comment type="subunit">
    <text evidence="1">Component of the 30S ribosomal translation pre-initiation complex which assembles on the 30S ribosome in the order IF-2 and IF-3, IF-1 and N-formylmethionyl-tRNA(fMet); mRNA recruitment can occur at any time during PIC assembly.</text>
</comment>
<comment type="subcellular location">
    <subcellularLocation>
        <location evidence="1">Cytoplasm</location>
    </subcellularLocation>
</comment>
<comment type="similarity">
    <text evidence="1">Belongs to the IF-1 family.</text>
</comment>
<feature type="chain" id="PRO_0000095904" description="Translation initiation factor IF-1">
    <location>
        <begin position="1"/>
        <end position="72"/>
    </location>
</feature>
<feature type="domain" description="S1-like" evidence="1">
    <location>
        <begin position="1"/>
        <end position="72"/>
    </location>
</feature>
<evidence type="ECO:0000255" key="1">
    <source>
        <dbReference type="HAMAP-Rule" id="MF_00075"/>
    </source>
</evidence>
<proteinExistence type="inferred from homology"/>